<name>ZAPB_VIBA3</name>
<keyword id="KW-0131">Cell cycle</keyword>
<keyword id="KW-0132">Cell division</keyword>
<keyword id="KW-0175">Coiled coil</keyword>
<keyword id="KW-0963">Cytoplasm</keyword>
<keyword id="KW-0717">Septation</keyword>
<dbReference type="EMBL" id="FM954972">
    <property type="protein sequence ID" value="CAV20202.1"/>
    <property type="molecule type" value="Genomic_DNA"/>
</dbReference>
<dbReference type="SMR" id="B7VLN0"/>
<dbReference type="STRING" id="575788.VS_2905"/>
<dbReference type="KEGG" id="vsp:VS_2905"/>
<dbReference type="eggNOG" id="COG3074">
    <property type="taxonomic scope" value="Bacteria"/>
</dbReference>
<dbReference type="HOGENOM" id="CLU_171174_2_0_6"/>
<dbReference type="Proteomes" id="UP000009100">
    <property type="component" value="Chromosome 1"/>
</dbReference>
<dbReference type="GO" id="GO:0005737">
    <property type="term" value="C:cytoplasm"/>
    <property type="evidence" value="ECO:0007669"/>
    <property type="project" value="UniProtKB-SubCell"/>
</dbReference>
<dbReference type="GO" id="GO:0000917">
    <property type="term" value="P:division septum assembly"/>
    <property type="evidence" value="ECO:0007669"/>
    <property type="project" value="UniProtKB-KW"/>
</dbReference>
<dbReference type="GO" id="GO:0043093">
    <property type="term" value="P:FtsZ-dependent cytokinesis"/>
    <property type="evidence" value="ECO:0007669"/>
    <property type="project" value="UniProtKB-UniRule"/>
</dbReference>
<dbReference type="Gene3D" id="1.20.5.340">
    <property type="match status" value="1"/>
</dbReference>
<dbReference type="HAMAP" id="MF_01196">
    <property type="entry name" value="ZapB"/>
    <property type="match status" value="1"/>
</dbReference>
<dbReference type="InterPro" id="IPR009252">
    <property type="entry name" value="Cell_div_ZapB"/>
</dbReference>
<dbReference type="Pfam" id="PF06005">
    <property type="entry name" value="ZapB"/>
    <property type="match status" value="1"/>
</dbReference>
<gene>
    <name evidence="1" type="primary">zapB</name>
    <name type="ordered locus">VS_2905</name>
</gene>
<accession>B7VLN0</accession>
<proteinExistence type="inferred from homology"/>
<organism>
    <name type="scientific">Vibrio atlanticus (strain LGP32)</name>
    <name type="common">Vibrio splendidus (strain Mel32)</name>
    <dbReference type="NCBI Taxonomy" id="575788"/>
    <lineage>
        <taxon>Bacteria</taxon>
        <taxon>Pseudomonadati</taxon>
        <taxon>Pseudomonadota</taxon>
        <taxon>Gammaproteobacteria</taxon>
        <taxon>Vibrionales</taxon>
        <taxon>Vibrionaceae</taxon>
        <taxon>Vibrio</taxon>
    </lineage>
</organism>
<protein>
    <recommendedName>
        <fullName evidence="1">Cell division protein ZapB</fullName>
    </recommendedName>
</protein>
<evidence type="ECO:0000255" key="1">
    <source>
        <dbReference type="HAMAP-Rule" id="MF_01196"/>
    </source>
</evidence>
<reference key="1">
    <citation type="submission" date="2009-02" db="EMBL/GenBank/DDBJ databases">
        <title>Vibrio splendidus str. LGP32 complete genome.</title>
        <authorList>
            <person name="Mazel D."/>
            <person name="Le Roux F."/>
        </authorList>
    </citation>
    <scope>NUCLEOTIDE SEQUENCE [LARGE SCALE GENOMIC DNA]</scope>
    <source>
        <strain>LGP32</strain>
    </source>
</reference>
<comment type="function">
    <text evidence="1">Non-essential, abundant cell division factor that is required for proper Z-ring formation. It is recruited early to the divisome by direct interaction with FtsZ, stimulating Z-ring assembly and thereby promoting cell division earlier in the cell cycle. Its recruitment to the Z-ring requires functional FtsA or ZipA.</text>
</comment>
<comment type="subunit">
    <text evidence="1">Homodimer. The ends of the coiled-coil dimer bind to each other, forming polymers. Interacts with FtsZ.</text>
</comment>
<comment type="subcellular location">
    <subcellularLocation>
        <location evidence="1">Cytoplasm</location>
    </subcellularLocation>
    <text evidence="1">Localizes to the septum at mid-cell, in a FtsZ-like pattern.</text>
</comment>
<comment type="similarity">
    <text evidence="1">Belongs to the ZapB family.</text>
</comment>
<sequence length="80" mass="9268">MSFEVLEQLEAKIQTAVDTIALLQMEVEELKEEKQALATEAGELKASRHELEQKTQQMQEEHSAWQDRIRNLLGKMDDVE</sequence>
<feature type="chain" id="PRO_1000164521" description="Cell division protein ZapB">
    <location>
        <begin position="1"/>
        <end position="80"/>
    </location>
</feature>
<feature type="coiled-coil region" evidence="1">
    <location>
        <begin position="3"/>
        <end position="80"/>
    </location>
</feature>